<gene>
    <name evidence="1" type="primary">rplC</name>
    <name type="ordered locus">BRE_484</name>
</gene>
<accession>B5RPI2</accession>
<protein>
    <recommendedName>
        <fullName evidence="1">Large ribosomal subunit protein uL3</fullName>
    </recommendedName>
    <alternativeName>
        <fullName evidence="3">50S ribosomal protein L3</fullName>
    </alternativeName>
</protein>
<reference key="1">
    <citation type="journal article" date="2008" name="PLoS Genet.">
        <title>The genome of Borrelia recurrentis, the agent of deadly louse-borne relapsing fever, is a degraded subset of tick-borne Borrelia duttonii.</title>
        <authorList>
            <person name="Lescot M."/>
            <person name="Audic S."/>
            <person name="Robert C."/>
            <person name="Nguyen T.T."/>
            <person name="Blanc G."/>
            <person name="Cutler S.J."/>
            <person name="Wincker P."/>
            <person name="Couloux A."/>
            <person name="Claverie J.-M."/>
            <person name="Raoult D."/>
            <person name="Drancourt M."/>
        </authorList>
    </citation>
    <scope>NUCLEOTIDE SEQUENCE [LARGE SCALE GENOMIC DNA]</scope>
    <source>
        <strain>A1</strain>
    </source>
</reference>
<keyword id="KW-0687">Ribonucleoprotein</keyword>
<keyword id="KW-0689">Ribosomal protein</keyword>
<keyword id="KW-0694">RNA-binding</keyword>
<keyword id="KW-0699">rRNA-binding</keyword>
<feature type="chain" id="PRO_1000141832" description="Large ribosomal subunit protein uL3">
    <location>
        <begin position="1"/>
        <end position="209"/>
    </location>
</feature>
<feature type="region of interest" description="Disordered" evidence="2">
    <location>
        <begin position="127"/>
        <end position="151"/>
    </location>
</feature>
<name>RL3_BORRA</name>
<comment type="function">
    <text evidence="1">One of the primary rRNA binding proteins, it binds directly near the 3'-end of the 23S rRNA, where it nucleates assembly of the 50S subunit.</text>
</comment>
<comment type="subunit">
    <text evidence="1">Part of the 50S ribosomal subunit. Forms a cluster with proteins L14 and L19.</text>
</comment>
<comment type="similarity">
    <text evidence="1">Belongs to the universal ribosomal protein uL3 family.</text>
</comment>
<evidence type="ECO:0000255" key="1">
    <source>
        <dbReference type="HAMAP-Rule" id="MF_01325"/>
    </source>
</evidence>
<evidence type="ECO:0000256" key="2">
    <source>
        <dbReference type="SAM" id="MobiDB-lite"/>
    </source>
</evidence>
<evidence type="ECO:0000305" key="3"/>
<sequence>MFGLIGKKVGMTQVFQSNGIVVPVTVIEFEPNYVIGKKTMERDGYDALIMGSVDLKGSKVSRPIKGQYKKLENIEPKRYVIEFKGLKGYDAGDEVGLDAFREIKYVDITGTTKGKGFQGAMKRHNFSGGPSSHGSKFHRHLGGTGQATTPARTFKGTKMAGRMGGEQQTIQNLEIVFIDEEKRAILVKGAVPGVKGSFVIVKKAKKVGI</sequence>
<dbReference type="EMBL" id="CP000993">
    <property type="protein sequence ID" value="ACH94716.1"/>
    <property type="molecule type" value="Genomic_DNA"/>
</dbReference>
<dbReference type="RefSeq" id="WP_012538232.1">
    <property type="nucleotide sequence ID" value="NZ_CP169983.1"/>
</dbReference>
<dbReference type="SMR" id="B5RPI2"/>
<dbReference type="KEGG" id="bre:BRE_484"/>
<dbReference type="HOGENOM" id="CLU_044142_4_1_12"/>
<dbReference type="Proteomes" id="UP000000612">
    <property type="component" value="Chromosome"/>
</dbReference>
<dbReference type="GO" id="GO:0022625">
    <property type="term" value="C:cytosolic large ribosomal subunit"/>
    <property type="evidence" value="ECO:0007669"/>
    <property type="project" value="TreeGrafter"/>
</dbReference>
<dbReference type="GO" id="GO:0019843">
    <property type="term" value="F:rRNA binding"/>
    <property type="evidence" value="ECO:0007669"/>
    <property type="project" value="UniProtKB-UniRule"/>
</dbReference>
<dbReference type="GO" id="GO:0003735">
    <property type="term" value="F:structural constituent of ribosome"/>
    <property type="evidence" value="ECO:0007669"/>
    <property type="project" value="InterPro"/>
</dbReference>
<dbReference type="GO" id="GO:0006412">
    <property type="term" value="P:translation"/>
    <property type="evidence" value="ECO:0007669"/>
    <property type="project" value="UniProtKB-UniRule"/>
</dbReference>
<dbReference type="FunFam" id="2.40.30.10:FF:000004">
    <property type="entry name" value="50S ribosomal protein L3"/>
    <property type="match status" value="1"/>
</dbReference>
<dbReference type="Gene3D" id="3.30.160.810">
    <property type="match status" value="1"/>
</dbReference>
<dbReference type="Gene3D" id="2.40.30.10">
    <property type="entry name" value="Translation factors"/>
    <property type="match status" value="1"/>
</dbReference>
<dbReference type="HAMAP" id="MF_01325_B">
    <property type="entry name" value="Ribosomal_uL3_B"/>
    <property type="match status" value="1"/>
</dbReference>
<dbReference type="InterPro" id="IPR000597">
    <property type="entry name" value="Ribosomal_uL3"/>
</dbReference>
<dbReference type="InterPro" id="IPR019927">
    <property type="entry name" value="Ribosomal_uL3_bac/org-type"/>
</dbReference>
<dbReference type="InterPro" id="IPR019926">
    <property type="entry name" value="Ribosomal_uL3_CS"/>
</dbReference>
<dbReference type="InterPro" id="IPR009000">
    <property type="entry name" value="Transl_B-barrel_sf"/>
</dbReference>
<dbReference type="NCBIfam" id="TIGR03625">
    <property type="entry name" value="L3_bact"/>
    <property type="match status" value="1"/>
</dbReference>
<dbReference type="PANTHER" id="PTHR11229">
    <property type="entry name" value="50S RIBOSOMAL PROTEIN L3"/>
    <property type="match status" value="1"/>
</dbReference>
<dbReference type="PANTHER" id="PTHR11229:SF16">
    <property type="entry name" value="LARGE RIBOSOMAL SUBUNIT PROTEIN UL3C"/>
    <property type="match status" value="1"/>
</dbReference>
<dbReference type="Pfam" id="PF00297">
    <property type="entry name" value="Ribosomal_L3"/>
    <property type="match status" value="1"/>
</dbReference>
<dbReference type="SUPFAM" id="SSF50447">
    <property type="entry name" value="Translation proteins"/>
    <property type="match status" value="1"/>
</dbReference>
<dbReference type="PROSITE" id="PS00474">
    <property type="entry name" value="RIBOSOMAL_L3"/>
    <property type="match status" value="1"/>
</dbReference>
<proteinExistence type="inferred from homology"/>
<organism>
    <name type="scientific">Borrelia recurrentis (strain A1)</name>
    <dbReference type="NCBI Taxonomy" id="412418"/>
    <lineage>
        <taxon>Bacteria</taxon>
        <taxon>Pseudomonadati</taxon>
        <taxon>Spirochaetota</taxon>
        <taxon>Spirochaetia</taxon>
        <taxon>Spirochaetales</taxon>
        <taxon>Borreliaceae</taxon>
        <taxon>Borrelia</taxon>
    </lineage>
</organism>